<keyword id="KW-0963">Cytoplasm</keyword>
<name>Y1431_STRP6</name>
<comment type="subcellular location">
    <subcellularLocation>
        <location evidence="1">Cytoplasm</location>
    </subcellularLocation>
</comment>
<comment type="similarity">
    <text evidence="1">Belongs to the UPF0291 family.</text>
</comment>
<evidence type="ECO:0000255" key="1">
    <source>
        <dbReference type="HAMAP-Rule" id="MF_01103"/>
    </source>
</evidence>
<evidence type="ECO:0000256" key="2">
    <source>
        <dbReference type="SAM" id="MobiDB-lite"/>
    </source>
</evidence>
<organism>
    <name type="scientific">Streptococcus pyogenes serotype M6 (strain ATCC BAA-946 / MGAS10394)</name>
    <dbReference type="NCBI Taxonomy" id="286636"/>
    <lineage>
        <taxon>Bacteria</taxon>
        <taxon>Bacillati</taxon>
        <taxon>Bacillota</taxon>
        <taxon>Bacilli</taxon>
        <taxon>Lactobacillales</taxon>
        <taxon>Streptococcaceae</taxon>
        <taxon>Streptococcus</taxon>
    </lineage>
</organism>
<proteinExistence type="inferred from homology"/>
<reference key="1">
    <citation type="journal article" date="2004" name="J. Infect. Dis.">
        <title>Progress toward characterization of the group A Streptococcus metagenome: complete genome sequence of a macrolide-resistant serotype M6 strain.</title>
        <authorList>
            <person name="Banks D.J."/>
            <person name="Porcella S.F."/>
            <person name="Barbian K.D."/>
            <person name="Beres S.B."/>
            <person name="Philips L.E."/>
            <person name="Voyich J.M."/>
            <person name="DeLeo F.R."/>
            <person name="Martin J.M."/>
            <person name="Somerville G.A."/>
            <person name="Musser J.M."/>
        </authorList>
    </citation>
    <scope>NUCLEOTIDE SEQUENCE [LARGE SCALE GENOMIC DNA]</scope>
    <source>
        <strain>ATCC BAA-946 / MGAS10394</strain>
    </source>
</reference>
<feature type="chain" id="PRO_0000095004" description="UPF0291 protein M6_Spy1431">
    <location>
        <begin position="1"/>
        <end position="85"/>
    </location>
</feature>
<feature type="region of interest" description="Disordered" evidence="2">
    <location>
        <begin position="62"/>
        <end position="85"/>
    </location>
</feature>
<accession>Q5XAJ7</accession>
<dbReference type="EMBL" id="CP000003">
    <property type="protein sequence ID" value="AAT87566.1"/>
    <property type="molecule type" value="Genomic_DNA"/>
</dbReference>
<dbReference type="RefSeq" id="WP_002983550.1">
    <property type="nucleotide sequence ID" value="NC_006086.1"/>
</dbReference>
<dbReference type="SMR" id="Q5XAJ7"/>
<dbReference type="KEGG" id="spa:M6_Spy1431"/>
<dbReference type="HOGENOM" id="CLU_173137_0_2_9"/>
<dbReference type="Proteomes" id="UP000001167">
    <property type="component" value="Chromosome"/>
</dbReference>
<dbReference type="GO" id="GO:0005737">
    <property type="term" value="C:cytoplasm"/>
    <property type="evidence" value="ECO:0007669"/>
    <property type="project" value="UniProtKB-SubCell"/>
</dbReference>
<dbReference type="Gene3D" id="1.10.287.540">
    <property type="entry name" value="Helix hairpin bin"/>
    <property type="match status" value="1"/>
</dbReference>
<dbReference type="HAMAP" id="MF_01103">
    <property type="entry name" value="UPF0291"/>
    <property type="match status" value="1"/>
</dbReference>
<dbReference type="InterPro" id="IPR009242">
    <property type="entry name" value="DUF896"/>
</dbReference>
<dbReference type="NCBIfam" id="NF002711">
    <property type="entry name" value="PRK02539.1"/>
    <property type="match status" value="1"/>
</dbReference>
<dbReference type="PANTHER" id="PTHR37300">
    <property type="entry name" value="UPF0291 PROTEIN CBO2609/CLC_2481"/>
    <property type="match status" value="1"/>
</dbReference>
<dbReference type="PANTHER" id="PTHR37300:SF1">
    <property type="entry name" value="UPF0291 PROTEIN YNZC"/>
    <property type="match status" value="1"/>
</dbReference>
<dbReference type="Pfam" id="PF05979">
    <property type="entry name" value="DUF896"/>
    <property type="match status" value="1"/>
</dbReference>
<dbReference type="SUPFAM" id="SSF158221">
    <property type="entry name" value="YnzC-like"/>
    <property type="match status" value="1"/>
</dbReference>
<protein>
    <recommendedName>
        <fullName evidence="1">UPF0291 protein M6_Spy1431</fullName>
    </recommendedName>
</protein>
<sequence>MDPKKIARINELAKKKKTVGLTGPEKVEQAKLREEYIEGYRRSVRHHIEGIKLVDEEGNDVTPEKLRQVQREKGLHGRSLDDPKS</sequence>
<gene>
    <name type="ordered locus">M6_Spy1431</name>
</gene>